<proteinExistence type="predicted"/>
<protein>
    <recommendedName>
        <fullName>Uncharacterized 7.9 kDa protein in cd-pseT intergenic region</fullName>
    </recommendedName>
</protein>
<accession>P39500</accession>
<organism>
    <name type="scientific">Enterobacteria phage T4</name>
    <name type="common">Bacteriophage T4</name>
    <dbReference type="NCBI Taxonomy" id="10665"/>
    <lineage>
        <taxon>Viruses</taxon>
        <taxon>Duplodnaviria</taxon>
        <taxon>Heunggongvirae</taxon>
        <taxon>Uroviricota</taxon>
        <taxon>Caudoviricetes</taxon>
        <taxon>Straboviridae</taxon>
        <taxon>Tevenvirinae</taxon>
        <taxon>Tequatrovirus</taxon>
    </lineage>
</organism>
<organismHost>
    <name type="scientific">Escherichia coli</name>
    <dbReference type="NCBI Taxonomy" id="562"/>
</organismHost>
<name>Y13G_BPT4</name>
<sequence length="66" mass="7918">MNNLEKIYRLCDKIEKEKKYLFCLWPIVDGRVGLDVLDYETEDRVDGSTFDNALDVIDWLEENYVR</sequence>
<gene>
    <name type="primary">y13G</name>
    <name type="synonym">cd.4</name>
</gene>
<dbReference type="EMBL" id="AF158101">
    <property type="protein sequence ID" value="AAD42550.1"/>
    <property type="molecule type" value="Genomic_DNA"/>
</dbReference>
<dbReference type="RefSeq" id="NP_049832.1">
    <property type="nucleotide sequence ID" value="NC_000866.4"/>
</dbReference>
<dbReference type="GeneID" id="1258735"/>
<dbReference type="KEGG" id="vg:1258735"/>
<dbReference type="OrthoDB" id="22198at10239"/>
<dbReference type="Proteomes" id="UP000009087">
    <property type="component" value="Segment"/>
</dbReference>
<keyword id="KW-1185">Reference proteome</keyword>
<feature type="chain" id="PRO_0000165180" description="Uncharacterized 7.9 kDa protein in cd-pseT intergenic region">
    <location>
        <begin position="1"/>
        <end position="66"/>
    </location>
</feature>
<reference key="1">
    <citation type="journal article" date="2003" name="Microbiol. Mol. Biol. Rev.">
        <title>Bacteriophage T4 genome.</title>
        <authorList>
            <person name="Miller E.S."/>
            <person name="Kutter E."/>
            <person name="Mosig G."/>
            <person name="Arisaka F."/>
            <person name="Kunisawa T."/>
            <person name="Ruger W."/>
        </authorList>
    </citation>
    <scope>NUCLEOTIDE SEQUENCE [LARGE SCALE GENOMIC DNA]</scope>
</reference>